<evidence type="ECO:0000250" key="1">
    <source>
        <dbReference type="UniProtKB" id="Q09328"/>
    </source>
</evidence>
<evidence type="ECO:0000250" key="2">
    <source>
        <dbReference type="UniProtKB" id="Q765H6"/>
    </source>
</evidence>
<evidence type="ECO:0000255" key="3"/>
<evidence type="ECO:0000269" key="4">
    <source>
    </source>
</evidence>
<evidence type="ECO:0000269" key="5">
    <source>
    </source>
</evidence>
<evidence type="ECO:0000269" key="6">
    <source>
    </source>
</evidence>
<evidence type="ECO:0000269" key="7">
    <source>
    </source>
</evidence>
<evidence type="ECO:0000269" key="8">
    <source>
    </source>
</evidence>
<evidence type="ECO:0000269" key="9">
    <source>
    </source>
</evidence>
<evidence type="ECO:0000303" key="10">
    <source>
    </source>
</evidence>
<evidence type="ECO:0000303" key="11">
    <source>
    </source>
</evidence>
<evidence type="ECO:0000303" key="12">
    <source>
    </source>
</evidence>
<evidence type="ECO:0000303" key="13">
    <source>
    </source>
</evidence>
<evidence type="ECO:0000305" key="14"/>
<dbReference type="EC" id="2.4.1.-" evidence="9"/>
<dbReference type="EC" id="2.4.1.155" evidence="4 6 9"/>
<dbReference type="EMBL" id="AB114297">
    <property type="protein sequence ID" value="BAD02406.1"/>
    <property type="status" value="ALT_INIT"/>
    <property type="molecule type" value="mRNA"/>
</dbReference>
<dbReference type="EMBL" id="AB109185">
    <property type="protein sequence ID" value="BAC84969.1"/>
    <property type="molecule type" value="mRNA"/>
</dbReference>
<dbReference type="EMBL" id="AB235153">
    <property type="protein sequence ID" value="BAE44474.1"/>
    <property type="status" value="ALT_INIT"/>
    <property type="molecule type" value="mRNA"/>
</dbReference>
<dbReference type="EMBL" id="AC016168">
    <property type="status" value="NOT_ANNOTATED_CDS"/>
    <property type="molecule type" value="Genomic_DNA"/>
</dbReference>
<dbReference type="EMBL" id="BC062354">
    <property type="protein sequence ID" value="AAH62354.1"/>
    <property type="status" value="ALT_SEQ"/>
    <property type="molecule type" value="mRNA"/>
</dbReference>
<dbReference type="EMBL" id="BC063862">
    <property type="protein sequence ID" value="AAH63862.1"/>
    <property type="status" value="ALT_SEQ"/>
    <property type="molecule type" value="mRNA"/>
</dbReference>
<dbReference type="EMBL" id="AK057861">
    <property type="protein sequence ID" value="BAB71598.1"/>
    <property type="status" value="ALT_SEQ"/>
    <property type="molecule type" value="mRNA"/>
</dbReference>
<dbReference type="CCDS" id="CCDS11751.1">
    <molecule id="Q3V5L5-5"/>
</dbReference>
<dbReference type="CCDS" id="CCDS45788.1">
    <molecule id="Q3V5L5-2"/>
</dbReference>
<dbReference type="CCDS" id="CCDS59299.1">
    <molecule id="Q3V5L5-1"/>
</dbReference>
<dbReference type="RefSeq" id="NP_001186101.1">
    <molecule id="Q3V5L5-1"/>
    <property type="nucleotide sequence ID" value="NM_001199172.2"/>
</dbReference>
<dbReference type="RefSeq" id="NP_653278.2">
    <molecule id="Q3V5L5-5"/>
    <property type="nucleotide sequence ID" value="NM_144677.2"/>
</dbReference>
<dbReference type="RefSeq" id="NP_945193.1">
    <molecule id="Q3V5L5-2"/>
    <property type="nucleotide sequence ID" value="NM_198955.1"/>
</dbReference>
<dbReference type="SMR" id="Q3V5L5"/>
<dbReference type="BioGRID" id="127000">
    <property type="interactions" value="120"/>
</dbReference>
<dbReference type="FunCoup" id="Q3V5L5">
    <property type="interactions" value="443"/>
</dbReference>
<dbReference type="IntAct" id="Q3V5L5">
    <property type="interactions" value="9"/>
</dbReference>
<dbReference type="MINT" id="Q3V5L5"/>
<dbReference type="STRING" id="9606.ENSP00000391227"/>
<dbReference type="CAZy" id="GT18">
    <property type="family name" value="Glycosyltransferase Family 18"/>
</dbReference>
<dbReference type="GlyCosmos" id="Q3V5L5">
    <property type="glycosylation" value="1 site, No reported glycans"/>
</dbReference>
<dbReference type="GlyGen" id="Q3V5L5">
    <property type="glycosylation" value="7 sites, 4 N-linked glycans (5 sites), 1 O-linked glycan (1 site)"/>
</dbReference>
<dbReference type="iPTMnet" id="Q3V5L5"/>
<dbReference type="PhosphoSitePlus" id="Q3V5L5"/>
<dbReference type="BioMuta" id="MGAT5B"/>
<dbReference type="DMDM" id="152040009"/>
<dbReference type="jPOST" id="Q3V5L5"/>
<dbReference type="MassIVE" id="Q3V5L5"/>
<dbReference type="PaxDb" id="9606-ENSP00000391227"/>
<dbReference type="PeptideAtlas" id="Q3V5L5"/>
<dbReference type="ProteomicsDB" id="61881">
    <molecule id="Q3V5L5-1"/>
</dbReference>
<dbReference type="ProteomicsDB" id="61882">
    <molecule id="Q3V5L5-2"/>
</dbReference>
<dbReference type="ProteomicsDB" id="61885">
    <molecule id="Q3V5L5-5"/>
</dbReference>
<dbReference type="Antibodypedia" id="46175">
    <property type="antibodies" value="55 antibodies from 17 providers"/>
</dbReference>
<dbReference type="DNASU" id="146664"/>
<dbReference type="Ensembl" id="ENST00000301618.8">
    <molecule id="Q3V5L5-5"/>
    <property type="protein sequence ID" value="ENSP00000301618.4"/>
    <property type="gene ID" value="ENSG00000167889.13"/>
</dbReference>
<dbReference type="Ensembl" id="ENST00000428789.6">
    <molecule id="Q3V5L5-2"/>
    <property type="protein sequence ID" value="ENSP00000391227.2"/>
    <property type="gene ID" value="ENSG00000167889.13"/>
</dbReference>
<dbReference type="Ensembl" id="ENST00000569840.7">
    <molecule id="Q3V5L5-1"/>
    <property type="protein sequence ID" value="ENSP00000456037.2"/>
    <property type="gene ID" value="ENSG00000167889.13"/>
</dbReference>
<dbReference type="GeneID" id="146664"/>
<dbReference type="KEGG" id="hsa:146664"/>
<dbReference type="MANE-Select" id="ENST00000569840.7">
    <property type="protein sequence ID" value="ENSP00000456037.2"/>
    <property type="RefSeq nucleotide sequence ID" value="NM_001199172.2"/>
    <property type="RefSeq protein sequence ID" value="NP_001186101.1"/>
</dbReference>
<dbReference type="UCSC" id="uc002jth.4">
    <molecule id="Q3V5L5-1"/>
    <property type="organism name" value="human"/>
</dbReference>
<dbReference type="AGR" id="HGNC:24140"/>
<dbReference type="CTD" id="146664"/>
<dbReference type="DisGeNET" id="146664"/>
<dbReference type="GeneCards" id="MGAT5B"/>
<dbReference type="HGNC" id="HGNC:24140">
    <property type="gene designation" value="MGAT5B"/>
</dbReference>
<dbReference type="HPA" id="ENSG00000167889">
    <property type="expression patterns" value="Tissue enriched (brain)"/>
</dbReference>
<dbReference type="MIM" id="612441">
    <property type="type" value="gene"/>
</dbReference>
<dbReference type="neXtProt" id="NX_Q3V5L5"/>
<dbReference type="OpenTargets" id="ENSG00000167889"/>
<dbReference type="PharmGKB" id="PA134987427"/>
<dbReference type="VEuPathDB" id="HostDB:ENSG00000167889"/>
<dbReference type="eggNOG" id="ENOG502QWJG">
    <property type="taxonomic scope" value="Eukaryota"/>
</dbReference>
<dbReference type="GeneTree" id="ENSGT00940000153470"/>
<dbReference type="HOGENOM" id="CLU_016749_0_0_1"/>
<dbReference type="InParanoid" id="Q3V5L5"/>
<dbReference type="OMA" id="SRFPECP"/>
<dbReference type="OrthoDB" id="2113294at2759"/>
<dbReference type="PAN-GO" id="Q3V5L5">
    <property type="GO annotations" value="3 GO annotations based on evolutionary models"/>
</dbReference>
<dbReference type="PhylomeDB" id="Q3V5L5"/>
<dbReference type="TreeFam" id="TF313714"/>
<dbReference type="BioCyc" id="MetaCyc:HS15606-MONOMER"/>
<dbReference type="PathwayCommons" id="Q3V5L5"/>
<dbReference type="SignaLink" id="Q3V5L5"/>
<dbReference type="SIGNOR" id="Q3V5L5"/>
<dbReference type="UniPathway" id="UPA00378"/>
<dbReference type="BioGRID-ORCS" id="146664">
    <property type="hits" value="20 hits in 1153 CRISPR screens"/>
</dbReference>
<dbReference type="ChiTaRS" id="MGAT5B">
    <property type="organism name" value="human"/>
</dbReference>
<dbReference type="GeneWiki" id="MGAT5B"/>
<dbReference type="GenomeRNAi" id="146664"/>
<dbReference type="Pharos" id="Q3V5L5">
    <property type="development level" value="Tbio"/>
</dbReference>
<dbReference type="PRO" id="PR:Q3V5L5"/>
<dbReference type="Proteomes" id="UP000005640">
    <property type="component" value="Chromosome 17"/>
</dbReference>
<dbReference type="RNAct" id="Q3V5L5">
    <property type="molecule type" value="protein"/>
</dbReference>
<dbReference type="Bgee" id="ENSG00000167889">
    <property type="expression patterns" value="Expressed in right frontal lobe and 128 other cell types or tissues"/>
</dbReference>
<dbReference type="ExpressionAtlas" id="Q3V5L5">
    <property type="expression patterns" value="baseline and differential"/>
</dbReference>
<dbReference type="GO" id="GO:0005794">
    <property type="term" value="C:Golgi apparatus"/>
    <property type="evidence" value="ECO:0000318"/>
    <property type="project" value="GO_Central"/>
</dbReference>
<dbReference type="GO" id="GO:0000139">
    <property type="term" value="C:Golgi membrane"/>
    <property type="evidence" value="ECO:0007669"/>
    <property type="project" value="UniProtKB-SubCell"/>
</dbReference>
<dbReference type="GO" id="GO:0030144">
    <property type="term" value="F:alpha-1,6-mannosylglycoprotein 6-beta-N-acetylglucosaminyltransferase activity"/>
    <property type="evidence" value="ECO:0000314"/>
    <property type="project" value="UniProtKB"/>
</dbReference>
<dbReference type="GO" id="GO:0030145">
    <property type="term" value="F:manganese ion binding"/>
    <property type="evidence" value="ECO:0000314"/>
    <property type="project" value="UniProtKB"/>
</dbReference>
<dbReference type="GO" id="GO:0006487">
    <property type="term" value="P:protein N-linked glycosylation"/>
    <property type="evidence" value="ECO:0000318"/>
    <property type="project" value="GO_Central"/>
</dbReference>
<dbReference type="GO" id="GO:0018242">
    <property type="term" value="P:protein O-linked glycosylation via serine"/>
    <property type="evidence" value="ECO:0000314"/>
    <property type="project" value="UniProtKB"/>
</dbReference>
<dbReference type="InterPro" id="IPR026116">
    <property type="entry name" value="GT18_cat"/>
</dbReference>
<dbReference type="InterPro" id="IPR052105">
    <property type="entry name" value="MGAT5_Glycosyltransferase"/>
</dbReference>
<dbReference type="PANTHER" id="PTHR15075:SF6">
    <property type="entry name" value="ALPHA-1,6-MANNOSYLGLYCOPROTEIN 6-BETA-N-ACETYLGLUCOSAMINYLTRANSFERASE B"/>
    <property type="match status" value="1"/>
</dbReference>
<dbReference type="PANTHER" id="PTHR15075">
    <property type="entry name" value="ALPHA-MANNOSIDE BETA-1,6-N-ACETYLGLUCOSAMINYLTRANSFERASE"/>
    <property type="match status" value="1"/>
</dbReference>
<dbReference type="Pfam" id="PF15024">
    <property type="entry name" value="Glyco_transf_18"/>
    <property type="match status" value="1"/>
</dbReference>
<comment type="function">
    <text evidence="4 5 6 7 8 9">Glycosyltransferase that acts on alpha-linked mannose of N-glycans and O-mannosyl glycans. Catalyzes the transfer of N-acetylglucosamine (GlcNAc) to the beta 1-6 linkage of the mannose residue of GlcNAc-beta1,2-Man-alpha on both the alpha1,3- and alpha1,6-linked mannose arms in the core structure of N-glycan. Also acts on the GlcNAc-beta1,2-Man-alpha1-Ser/Thr moiety, forming a 2,6-branched structure in brain O-mannosyl glycan. Plays an active role in modulating integrin and laminin-dependent adhesion and migration of neuronal cells via its activity in the O-mannosyl glycan pathway.</text>
</comment>
<comment type="catalytic activity">
    <reaction evidence="4 6 9">
        <text>N(4)-{beta-D-GlcNAc-(1-&gt;2)-[beta-D-GlcNAc-(1-&gt;4)]-alpha-D-Man-(1-&gt;3)-[beta-D-GlcNAc-(1-&gt;2)-alpha-D-Man-(1-&gt;6)]-beta-D-Man-(1-&gt;4)-beta-D-GlcNAc-(1-&gt;4)-beta-D-GlcNAc}-L-asparaginyl-[protein] + UDP-N-acetyl-alpha-D-glucosamine = N(4)-{beta-D-GlcNAc-(1-&gt;2)-[beta-D-GlcNAc-(1-&gt;4)]-alpha-D-Man-(1-&gt;3)-[beta-D-GlcNAc-(1-&gt;2)-[beta-D-GlcNAc-(1-&gt;6)]-alpha-D-Man-(1-&gt;6)]-beta-D-Man-(1-&gt;4)-beta-D-GlcNAc-(1-&gt;4)-beta-D-GlcNAc}-L-asparaginyl-[protein] + UDP + H(+)</text>
        <dbReference type="Rhea" id="RHEA:16921"/>
        <dbReference type="Rhea" id="RHEA-COMP:14374"/>
        <dbReference type="Rhea" id="RHEA-COMP:14377"/>
        <dbReference type="ChEBI" id="CHEBI:15378"/>
        <dbReference type="ChEBI" id="CHEBI:57705"/>
        <dbReference type="ChEBI" id="CHEBI:58223"/>
        <dbReference type="ChEBI" id="CHEBI:139507"/>
        <dbReference type="ChEBI" id="CHEBI:139510"/>
        <dbReference type="EC" id="2.4.1.155"/>
    </reaction>
</comment>
<comment type="catalytic activity">
    <reaction evidence="4 5 6">
        <text>3-O-[N-acetyl-beta-D-glucosaminyl-(1-&gt;2)-alpha-D-mannosyl]-L-seryl-[protein] + UDP-N-acetyl-alpha-D-glucosamine = O(3)-{N-acetyl-beta-D-glucosaminyl-(1-&gt;2)-[N-acetyl-beta-D-glucosaminyl-(1-&gt;6)]-alpha-D-mannosyl}-L-seryl-[protein] + UDP + H(+)</text>
        <dbReference type="Rhea" id="RHEA:56252"/>
        <dbReference type="Rhea" id="RHEA-COMP:14438"/>
        <dbReference type="Rhea" id="RHEA-COMP:14440"/>
        <dbReference type="ChEBI" id="CHEBI:15378"/>
        <dbReference type="ChEBI" id="CHEBI:57705"/>
        <dbReference type="ChEBI" id="CHEBI:58223"/>
        <dbReference type="ChEBI" id="CHEBI:140080"/>
        <dbReference type="ChEBI" id="CHEBI:140085"/>
    </reaction>
</comment>
<comment type="catalytic activity">
    <reaction evidence="4 5 6 9">
        <text>3-O-[N-acetyl-beta-D-glucosaminyl-(1-&gt;2)-alpha-D-mannosyl]-L-threonyl-[protein] + UDP-N-acetyl-alpha-D-glucosamine = O(3)-{N-acetyl-beta-D-glucosaminyl-(1-&gt;2)-[N-acetyl-beta-D-glucosaminyl-(1-&gt;6)]-alpha-D-mannosyl}-L-threonyl-[protein] + UDP + H(+)</text>
        <dbReference type="Rhea" id="RHEA:56256"/>
        <dbReference type="Rhea" id="RHEA-COMP:14439"/>
        <dbReference type="Rhea" id="RHEA-COMP:14441"/>
        <dbReference type="ChEBI" id="CHEBI:15378"/>
        <dbReference type="ChEBI" id="CHEBI:57705"/>
        <dbReference type="ChEBI" id="CHEBI:58223"/>
        <dbReference type="ChEBI" id="CHEBI:140083"/>
        <dbReference type="ChEBI" id="CHEBI:140087"/>
    </reaction>
</comment>
<comment type="cofactor">
    <cofactor evidence="6 9">
        <name>Mn(2+)</name>
        <dbReference type="ChEBI" id="CHEBI:29035"/>
    </cofactor>
</comment>
<comment type="biophysicochemical properties">
    <kinetics>
        <KM evidence="9">0.56 mM for UDP-GlcNAc</KM>
    </kinetics>
    <phDependence>
        <text evidence="9">Optimum pH is 8.0.</text>
    </phDependence>
</comment>
<comment type="pathway">
    <text evidence="4 5 6 9">Protein modification; protein glycosylation.</text>
</comment>
<comment type="interaction">
    <interactant intactId="EBI-3957727">
        <id>Q3V5L5</id>
    </interactant>
    <interactant intactId="EBI-3957603">
        <id>P09022</id>
        <label>Hoxa1</label>
    </interactant>
    <organismsDiffer>true</organismsDiffer>
    <experiments>3</experiments>
</comment>
<comment type="subcellular location">
    <subcellularLocation>
        <location evidence="2">Golgi apparatus membrane</location>
        <topology evidence="2">Single-pass type II membrane protein</topology>
    </subcellularLocation>
</comment>
<comment type="alternative products">
    <event type="alternative splicing"/>
    <isoform>
        <id>Q3V5L5-1</id>
        <name>1</name>
        <sequence type="displayed"/>
    </isoform>
    <isoform>
        <id>Q3V5L5-2</id>
        <name>2</name>
        <sequence type="described" ref="VSP_025731 VSP_025734"/>
    </isoform>
    <isoform>
        <id>Q3V5L5-5</id>
        <name>3</name>
        <sequence type="described" ref="VSP_025734"/>
    </isoform>
</comment>
<comment type="tissue specificity">
    <text evidence="4 6">Predominantly expressed in brain. Expressed in all areas of the adult and fetal brain. Also expressed at much lower levels in testis, spleen and thymus.</text>
</comment>
<comment type="similarity">
    <text evidence="14">Belongs to the glycosyltransferase 18 family.</text>
</comment>
<comment type="sequence caution" evidence="14">
    <conflict type="miscellaneous discrepancy">
        <sequence resource="EMBL-CDS" id="AAH62354"/>
    </conflict>
    <text>Probable cloning artifact.</text>
</comment>
<comment type="sequence caution" evidence="14">
    <conflict type="miscellaneous discrepancy">
        <sequence resource="EMBL-CDS" id="AAH63862"/>
    </conflict>
    <text>Probable cloning artifact.</text>
</comment>
<comment type="sequence caution" evidence="14">
    <conflict type="miscellaneous discrepancy">
        <sequence resource="EMBL-CDS" id="BAB71598"/>
    </conflict>
    <text>Chimeric sequence.</text>
</comment>
<comment type="sequence caution" evidence="14">
    <conflict type="erroneous initiation">
        <sequence resource="EMBL-CDS" id="BAD02406"/>
    </conflict>
    <text>Truncated N-terminus.</text>
</comment>
<comment type="sequence caution" evidence="14">
    <conflict type="erroneous initiation">
        <sequence resource="EMBL-CDS" id="BAE44474"/>
    </conflict>
    <text>Extended N-terminus.</text>
</comment>
<name>MGT5B_HUMAN</name>
<keyword id="KW-0025">Alternative splicing</keyword>
<keyword id="KW-1015">Disulfide bond</keyword>
<keyword id="KW-0325">Glycoprotein</keyword>
<keyword id="KW-0328">Glycosyltransferase</keyword>
<keyword id="KW-0333">Golgi apparatus</keyword>
<keyword id="KW-0464">Manganese</keyword>
<keyword id="KW-0472">Membrane</keyword>
<keyword id="KW-0479">Metal-binding</keyword>
<keyword id="KW-1267">Proteomics identification</keyword>
<keyword id="KW-1185">Reference proteome</keyword>
<keyword id="KW-0735">Signal-anchor</keyword>
<keyword id="KW-0808">Transferase</keyword>
<keyword id="KW-0812">Transmembrane</keyword>
<keyword id="KW-1133">Transmembrane helix</keyword>
<organism>
    <name type="scientific">Homo sapiens</name>
    <name type="common">Human</name>
    <dbReference type="NCBI Taxonomy" id="9606"/>
    <lineage>
        <taxon>Eukaryota</taxon>
        <taxon>Metazoa</taxon>
        <taxon>Chordata</taxon>
        <taxon>Craniata</taxon>
        <taxon>Vertebrata</taxon>
        <taxon>Euteleostomi</taxon>
        <taxon>Mammalia</taxon>
        <taxon>Eutheria</taxon>
        <taxon>Euarchontoglires</taxon>
        <taxon>Primates</taxon>
        <taxon>Haplorrhini</taxon>
        <taxon>Catarrhini</taxon>
        <taxon>Hominidae</taxon>
        <taxon>Homo</taxon>
    </lineage>
</organism>
<reference key="1">
    <citation type="journal article" date="2003" name="FEBS Lett.">
        <title>A novel beta(1,6)-N-acetylglucosaminyltransferase V (GnT-VB).</title>
        <authorList>
            <person name="Kaneko M."/>
            <person name="Alvarez-Manilla G."/>
            <person name="Kamar M."/>
            <person name="Lee I."/>
            <person name="Lee J.-K."/>
            <person name="Troupe K."/>
            <person name="Zhang W."/>
            <person name="Osawa M."/>
            <person name="Pierce M."/>
        </authorList>
    </citation>
    <scope>NUCLEOTIDE SEQUENCE [MRNA] (ISOFORM 2)</scope>
    <scope>FUNCTION</scope>
    <scope>CATALYTIC ACTIVITY</scope>
    <scope>COFACTOR</scope>
    <scope>PATHWAY</scope>
    <scope>TISSUE SPECIFICITY</scope>
</reference>
<reference key="2">
    <citation type="journal article" date="2003" name="J. Biol. Chem.">
        <title>Molecular cloning and characterization of human GnT-IX, a novel beta1,6-N-acetylglucosaminyltransferase that is specifically expressed in the brain.</title>
        <authorList>
            <person name="Inamori K."/>
            <person name="Endo T."/>
            <person name="Ide Y."/>
            <person name="Fujii S."/>
            <person name="Gu J."/>
            <person name="Honke K."/>
            <person name="Taniguchi N."/>
        </authorList>
    </citation>
    <scope>NUCLEOTIDE SEQUENCE [MRNA] (ISOFORM 1)</scope>
    <scope>CATALYTIC ACTIVITY</scope>
    <scope>FUNCTION</scope>
    <scope>PATHWAY</scope>
    <scope>TISSUE SPECIFICITY</scope>
    <source>
        <tissue>Brain</tissue>
    </source>
</reference>
<reference key="3">
    <citation type="submission" date="2002-11" db="EMBL/GenBank/DDBJ databases">
        <title>The nucleotide sequence of a long cDNA clone isolated from human.</title>
        <authorList>
            <person name="Nagase T."/>
            <person name="Kikuno R."/>
            <person name="Ohara O."/>
        </authorList>
    </citation>
    <scope>NUCLEOTIDE SEQUENCE [LARGE SCALE MRNA] (ISOFORM 1)</scope>
    <source>
        <tissue>Brain</tissue>
    </source>
</reference>
<reference key="4">
    <citation type="journal article" date="2006" name="Nature">
        <title>DNA sequence of human chromosome 17 and analysis of rearrangement in the human lineage.</title>
        <authorList>
            <person name="Zody M.C."/>
            <person name="Garber M."/>
            <person name="Adams D.J."/>
            <person name="Sharpe T."/>
            <person name="Harrow J."/>
            <person name="Lupski J.R."/>
            <person name="Nicholson C."/>
            <person name="Searle S.M."/>
            <person name="Wilming L."/>
            <person name="Young S.K."/>
            <person name="Abouelleil A."/>
            <person name="Allen N.R."/>
            <person name="Bi W."/>
            <person name="Bloom T."/>
            <person name="Borowsky M.L."/>
            <person name="Bugalter B.E."/>
            <person name="Butler J."/>
            <person name="Chang J.L."/>
            <person name="Chen C.-K."/>
            <person name="Cook A."/>
            <person name="Corum B."/>
            <person name="Cuomo C.A."/>
            <person name="de Jong P.J."/>
            <person name="DeCaprio D."/>
            <person name="Dewar K."/>
            <person name="FitzGerald M."/>
            <person name="Gilbert J."/>
            <person name="Gibson R."/>
            <person name="Gnerre S."/>
            <person name="Goldstein S."/>
            <person name="Grafham D.V."/>
            <person name="Grocock R."/>
            <person name="Hafez N."/>
            <person name="Hagopian D.S."/>
            <person name="Hart E."/>
            <person name="Norman C.H."/>
            <person name="Humphray S."/>
            <person name="Jaffe D.B."/>
            <person name="Jones M."/>
            <person name="Kamal M."/>
            <person name="Khodiyar V.K."/>
            <person name="LaButti K."/>
            <person name="Laird G."/>
            <person name="Lehoczky J."/>
            <person name="Liu X."/>
            <person name="Lokyitsang T."/>
            <person name="Loveland J."/>
            <person name="Lui A."/>
            <person name="Macdonald P."/>
            <person name="Major J.E."/>
            <person name="Matthews L."/>
            <person name="Mauceli E."/>
            <person name="McCarroll S.A."/>
            <person name="Mihalev A.H."/>
            <person name="Mudge J."/>
            <person name="Nguyen C."/>
            <person name="Nicol R."/>
            <person name="O'Leary S.B."/>
            <person name="Osoegawa K."/>
            <person name="Schwartz D.C."/>
            <person name="Shaw-Smith C."/>
            <person name="Stankiewicz P."/>
            <person name="Steward C."/>
            <person name="Swarbreck D."/>
            <person name="Venkataraman V."/>
            <person name="Whittaker C.A."/>
            <person name="Yang X."/>
            <person name="Zimmer A.R."/>
            <person name="Bradley A."/>
            <person name="Hubbard T."/>
            <person name="Birren B.W."/>
            <person name="Rogers J."/>
            <person name="Lander E.S."/>
            <person name="Nusbaum C."/>
        </authorList>
    </citation>
    <scope>NUCLEOTIDE SEQUENCE [LARGE SCALE GENOMIC DNA]</scope>
</reference>
<reference key="5">
    <citation type="journal article" date="2004" name="Genome Res.">
        <title>The status, quality, and expansion of the NIH full-length cDNA project: the Mammalian Gene Collection (MGC).</title>
        <authorList>
            <consortium name="The MGC Project Team"/>
        </authorList>
    </citation>
    <scope>NUCLEOTIDE SEQUENCE [LARGE SCALE MRNA] OF 1-341 (ISOFORMS 1/3)</scope>
    <scope>NUCLEOTIDE SEQUENCE [LARGE SCALE MRNA] OF 616-792</scope>
    <source>
        <tissue>PNS</tissue>
        <tissue>Skin</tissue>
    </source>
</reference>
<reference key="6">
    <citation type="journal article" date="2004" name="Nat. Genet.">
        <title>Complete sequencing and characterization of 21,243 full-length human cDNAs.</title>
        <authorList>
            <person name="Ota T."/>
            <person name="Suzuki Y."/>
            <person name="Nishikawa T."/>
            <person name="Otsuki T."/>
            <person name="Sugiyama T."/>
            <person name="Irie R."/>
            <person name="Wakamatsu A."/>
            <person name="Hayashi K."/>
            <person name="Sato H."/>
            <person name="Nagai K."/>
            <person name="Kimura K."/>
            <person name="Makita H."/>
            <person name="Sekine M."/>
            <person name="Obayashi M."/>
            <person name="Nishi T."/>
            <person name="Shibahara T."/>
            <person name="Tanaka T."/>
            <person name="Ishii S."/>
            <person name="Yamamoto J."/>
            <person name="Saito K."/>
            <person name="Kawai Y."/>
            <person name="Isono Y."/>
            <person name="Nakamura Y."/>
            <person name="Nagahari K."/>
            <person name="Murakami K."/>
            <person name="Yasuda T."/>
            <person name="Iwayanagi T."/>
            <person name="Wagatsuma M."/>
            <person name="Shiratori A."/>
            <person name="Sudo H."/>
            <person name="Hosoiri T."/>
            <person name="Kaku Y."/>
            <person name="Kodaira H."/>
            <person name="Kondo H."/>
            <person name="Sugawara M."/>
            <person name="Takahashi M."/>
            <person name="Kanda K."/>
            <person name="Yokoi T."/>
            <person name="Furuya T."/>
            <person name="Kikkawa E."/>
            <person name="Omura Y."/>
            <person name="Abe K."/>
            <person name="Kamihara K."/>
            <person name="Katsuta N."/>
            <person name="Sato K."/>
            <person name="Tanikawa M."/>
            <person name="Yamazaki M."/>
            <person name="Ninomiya K."/>
            <person name="Ishibashi T."/>
            <person name="Yamashita H."/>
            <person name="Murakawa K."/>
            <person name="Fujimori K."/>
            <person name="Tanai H."/>
            <person name="Kimata M."/>
            <person name="Watanabe M."/>
            <person name="Hiraoka S."/>
            <person name="Chiba Y."/>
            <person name="Ishida S."/>
            <person name="Ono Y."/>
            <person name="Takiguchi S."/>
            <person name="Watanabe S."/>
            <person name="Yosida M."/>
            <person name="Hotuta T."/>
            <person name="Kusano J."/>
            <person name="Kanehori K."/>
            <person name="Takahashi-Fujii A."/>
            <person name="Hara H."/>
            <person name="Tanase T.-O."/>
            <person name="Nomura Y."/>
            <person name="Togiya S."/>
            <person name="Komai F."/>
            <person name="Hara R."/>
            <person name="Takeuchi K."/>
            <person name="Arita M."/>
            <person name="Imose N."/>
            <person name="Musashino K."/>
            <person name="Yuuki H."/>
            <person name="Oshima A."/>
            <person name="Sasaki N."/>
            <person name="Aotsuka S."/>
            <person name="Yoshikawa Y."/>
            <person name="Matsunawa H."/>
            <person name="Ichihara T."/>
            <person name="Shiohata N."/>
            <person name="Sano S."/>
            <person name="Moriya S."/>
            <person name="Momiyama H."/>
            <person name="Satoh N."/>
            <person name="Takami S."/>
            <person name="Terashima Y."/>
            <person name="Suzuki O."/>
            <person name="Nakagawa S."/>
            <person name="Senoh A."/>
            <person name="Mizoguchi H."/>
            <person name="Goto Y."/>
            <person name="Shimizu F."/>
            <person name="Wakebe H."/>
            <person name="Hishigaki H."/>
            <person name="Watanabe T."/>
            <person name="Sugiyama A."/>
            <person name="Takemoto M."/>
            <person name="Kawakami B."/>
            <person name="Yamazaki M."/>
            <person name="Watanabe K."/>
            <person name="Kumagai A."/>
            <person name="Itakura S."/>
            <person name="Fukuzumi Y."/>
            <person name="Fujimori Y."/>
            <person name="Komiyama M."/>
            <person name="Tashiro H."/>
            <person name="Tanigami A."/>
            <person name="Fujiwara T."/>
            <person name="Ono T."/>
            <person name="Yamada K."/>
            <person name="Fujii Y."/>
            <person name="Ozaki K."/>
            <person name="Hirao M."/>
            <person name="Ohmori Y."/>
            <person name="Kawabata A."/>
            <person name="Hikiji T."/>
            <person name="Kobatake N."/>
            <person name="Inagaki H."/>
            <person name="Ikema Y."/>
            <person name="Okamoto S."/>
            <person name="Okitani R."/>
            <person name="Kawakami T."/>
            <person name="Noguchi S."/>
            <person name="Itoh T."/>
            <person name="Shigeta K."/>
            <person name="Senba T."/>
            <person name="Matsumura K."/>
            <person name="Nakajima Y."/>
            <person name="Mizuno T."/>
            <person name="Morinaga M."/>
            <person name="Sasaki M."/>
            <person name="Togashi T."/>
            <person name="Oyama M."/>
            <person name="Hata H."/>
            <person name="Watanabe M."/>
            <person name="Komatsu T."/>
            <person name="Mizushima-Sugano J."/>
            <person name="Satoh T."/>
            <person name="Shirai Y."/>
            <person name="Takahashi Y."/>
            <person name="Nakagawa K."/>
            <person name="Okumura K."/>
            <person name="Nagase T."/>
            <person name="Nomura N."/>
            <person name="Kikuchi H."/>
            <person name="Masuho Y."/>
            <person name="Yamashita R."/>
            <person name="Nakai K."/>
            <person name="Yada T."/>
            <person name="Nakamura Y."/>
            <person name="Ohara O."/>
            <person name="Isogai T."/>
            <person name="Sugano S."/>
        </authorList>
    </citation>
    <scope>NUCLEOTIDE SEQUENCE [LARGE SCALE MRNA] OF 100-306</scope>
    <source>
        <tissue>Brain</tissue>
    </source>
</reference>
<reference key="7">
    <citation type="journal article" date="2004" name="J. Biol. Chem.">
        <title>N-Acetylglucosaminyltransferase IX acts on the GlcNAc beta 1,2-Man alpha 1-Ser/Thr moiety, forming a 2,6-branched structure in brain O-mannosyl glycan.</title>
        <authorList>
            <person name="Inamori K."/>
            <person name="Endo T."/>
            <person name="Gu J."/>
            <person name="Matsuo I."/>
            <person name="Ito Y."/>
            <person name="Fujii S."/>
            <person name="Iwasaki H."/>
            <person name="Narimatsu H."/>
            <person name="Miyoshi E."/>
            <person name="Honke K."/>
            <person name="Taniguchi N."/>
        </authorList>
    </citation>
    <scope>FUNCTION</scope>
    <scope>PATHWAY</scope>
    <scope>CATALYTIC ACTIVITY</scope>
</reference>
<reference key="8">
    <citation type="journal article" date="2006" name="Exp. Cell Res.">
        <title>Integrin-dependent neuroblastoma cell adhesion and migration on laminin is regulated by expression levels of two enzymes in the O-mannosyl-linked glycosylation pathway, PomGnT1 and GnT-Vb.</title>
        <authorList>
            <person name="Abbott K.L."/>
            <person name="Troupe K."/>
            <person name="Lee I."/>
            <person name="Pierce M."/>
        </authorList>
    </citation>
    <scope>FUNCTION</scope>
</reference>
<reference key="9">
    <citation type="journal article" date="2006" name="J. Neurochem.">
        <title>N-acetylglucosaminyltransferase VB expression enhances beta1 integrin-dependent PC12 neurite outgrowth on laminin and collagen.</title>
        <authorList>
            <person name="Lee I."/>
            <person name="Guo H.-B."/>
            <person name="Kamar M."/>
            <person name="Abbott K."/>
            <person name="Troupe K."/>
            <person name="Lee J.-K."/>
            <person name="Alvarez-Manilla G."/>
            <person name="Pierce M."/>
        </authorList>
    </citation>
    <scope>FUNCTION</scope>
</reference>
<reference key="10">
    <citation type="journal article" date="2010" name="Glycobiology">
        <title>Comparison of the substrate specificities and catalytic properties of the sister N-acetylglucosaminyltransferases, GnT-V and GnT-Vb (IX).</title>
        <authorList>
            <person name="Alvarez-Manilla G."/>
            <person name="Troupe K."/>
            <person name="Fleming M."/>
            <person name="Martinez-Uribe E."/>
            <person name="Pierce M."/>
        </authorList>
    </citation>
    <scope>FUNCTION</scope>
    <scope>CATALYTIC ACTIVITY</scope>
    <scope>COFACTOR</scope>
    <scope>PATHWAY</scope>
    <scope>BIOPHYSICOCHEMICAL PROPERTIES</scope>
</reference>
<feature type="chain" id="PRO_0000288611" description="Alpha-1,6-mannosylglycoprotein 6-beta-N-acetylglucosaminyltransferase B">
    <location>
        <begin position="1"/>
        <end position="792"/>
    </location>
</feature>
<feature type="topological domain" description="Cytoplasmic" evidence="3">
    <location>
        <begin position="1"/>
        <end position="24"/>
    </location>
</feature>
<feature type="transmembrane region" description="Helical; Signal-anchor for type II membrane protein" evidence="3">
    <location>
        <begin position="25"/>
        <end position="45"/>
    </location>
</feature>
<feature type="topological domain" description="Lumenal" evidence="3">
    <location>
        <begin position="46"/>
        <end position="792"/>
    </location>
</feature>
<feature type="glycosylation site" description="N-linked (GlcNAc...) asparagine" evidence="3">
    <location>
        <position position="127"/>
    </location>
</feature>
<feature type="disulfide bond" evidence="1">
    <location>
        <begin position="157"/>
        <end position="195"/>
    </location>
</feature>
<feature type="disulfide bond" evidence="1">
    <location>
        <begin position="168"/>
        <end position="208"/>
    </location>
</feature>
<feature type="disulfide bond" evidence="1">
    <location>
        <begin position="184"/>
        <end position="353"/>
    </location>
</feature>
<feature type="disulfide bond" evidence="1">
    <location>
        <begin position="387"/>
        <end position="644"/>
    </location>
</feature>
<feature type="disulfide bond" evidence="1">
    <location>
        <begin position="700"/>
        <end position="775"/>
    </location>
</feature>
<feature type="disulfide bond" evidence="1">
    <location>
        <begin position="704"/>
        <end position="777"/>
    </location>
</feature>
<feature type="disulfide bond" evidence="1">
    <location>
        <begin position="711"/>
        <end position="764"/>
    </location>
</feature>
<feature type="disulfide bond" evidence="1">
    <location>
        <begin position="732"/>
        <end position="753"/>
    </location>
</feature>
<feature type="disulfide bond" evidence="1">
    <location>
        <begin position="788"/>
        <end position="791"/>
    </location>
</feature>
<feature type="splice variant" id="VSP_025731" description="In isoform 2." evidence="11">
    <original>MITVNPDGKIMVRRCLVTLRPF</original>
    <variation>MHSFVKHLCSRYVVERQGTMALPALLTRLLPLR</variation>
    <location>
        <begin position="1"/>
        <end position="22"/>
    </location>
</feature>
<feature type="splice variant" id="VSP_025734" description="In isoform 2 and isoform 3." evidence="11">
    <location>
        <begin position="475"/>
        <end position="476"/>
    </location>
</feature>
<feature type="sequence variant" id="VAR_032452" description="In dbSNP:rs571264.">
    <original>V</original>
    <variation>I</variation>
    <location>
        <position position="70"/>
    </location>
</feature>
<proteinExistence type="evidence at protein level"/>
<gene>
    <name type="primary">MGAT5B</name>
    <name type="synonym">KIAA2008</name>
</gene>
<protein>
    <recommendedName>
        <fullName>Alpha-1,6-mannosylglycoprotein 6-beta-N-acetylglucosaminyltransferase B</fullName>
        <ecNumber evidence="9">2.4.1.-</ecNumber>
        <ecNumber evidence="4 6 9">2.4.1.155</ecNumber>
    </recommendedName>
    <alternativeName>
        <fullName>Alpha-mannoside beta-1,6-N-acetylglucosaminyltransferase B</fullName>
    </alternativeName>
    <alternativeName>
        <fullName evidence="13">GlcNAc-T Vb</fullName>
        <shortName evidence="12 13">GNT-Vb</shortName>
        <shortName>hGnTVb</shortName>
    </alternativeName>
    <alternativeName>
        <fullName>Mannoside acetylglucosaminyltransferase 5B</fullName>
    </alternativeName>
    <alternativeName>
        <fullName>N-acetylglucosaminyl-transferase Vb</fullName>
    </alternativeName>
    <alternativeName>
        <fullName evidence="10">N-acetylglucosaminyltransferase IX</fullName>
        <shortName evidence="13">GNT-IX</shortName>
    </alternativeName>
</protein>
<sequence length="792" mass="89535">MITVNPDGKIMVRRCLVTLRPFRLFVLGIGFFTLCFLMTSLGGQFSARRLGDSPFTIRTEVMGGPESRGVLRKMSDLLELMVKRMDALARLENSSELHRAGGDLHFPADRMPPGAGLMERIQAIAQNVSDIAVKVDQILRHSLLLHSKVSEGRRDQCEAPSDPKFPDCSGKVEWMRARWTSDPCYAFFGVDGTECSFLIYLSEVEWFCPPLPWRNQTAAQRAPKPLPKVQAVFRSNLSHLLDLMGSGKESLIFMKKRTKRLTAQWALAAQRLAQKLGATQRDQKQILVHIGFLTEESGDVFSPRVLKGGPLGEMVQWADILTALYVLGHGLRVTVSLKELQSNLGVPPGRGSCPLTMPLPFDLIYTDYHGLQQMKRHMGLSFKKYRCRIRVIDTFGTEPAYNHEEYATLHGYRTNWGYWNLNPKQFMTMFPHTPDNSFMGFVSEELNETEKRLIKGGKASNMAVVYGKEASIWKLQGKEKFLGILNKYMEIHGTVYYESQRPPEVPAFVKNHGLLPQPEFQQLLRKAKLFIGFGFPYEGPAPLEAIANGCIFLQSRFSPPHSSLNHEFFRGKPTSREVFSQHPYAENFIGKPHVWTVDYNNSEEFEAAIKAIMRTQVDPYLPYEYTCEGMLERIHAYIQHQDFCRAPDPALPEAHAPQSPFVLAPNATHLEWARNTSLAPGAWPPAHALRAWLAVPGRACTDTCLDHGLICEPSFFPFLNSQDAFLKLQVPCDSTESEMNHLYPAFAQPGQECYLQKEPLLFSCAGSNTKYRRLCPCRDFRKGQVALCQGCL</sequence>
<accession>Q3V5L5</accession>
<accession>Q6P3S8</accession>
<accession>Q6P6B3</accession>
<accession>Q766X5</accession>
<accession>Q76D04</accession>
<accession>Q96LS2</accession>